<name>GLGD_GEOSE</name>
<gene>
    <name type="primary">glgD</name>
</gene>
<comment type="function">
    <text>Required for the synthesis of glycogen.</text>
</comment>
<comment type="similarity">
    <text evidence="1">Belongs to the bacterial/plant glucose-1-phosphate adenylyltransferase family.</text>
</comment>
<organism>
    <name type="scientific">Geobacillus stearothermophilus</name>
    <name type="common">Bacillus stearothermophilus</name>
    <dbReference type="NCBI Taxonomy" id="1422"/>
    <lineage>
        <taxon>Bacteria</taxon>
        <taxon>Bacillati</taxon>
        <taxon>Bacillota</taxon>
        <taxon>Bacilli</taxon>
        <taxon>Bacillales</taxon>
        <taxon>Anoxybacillaceae</taxon>
        <taxon>Geobacillus</taxon>
    </lineage>
</organism>
<accession>O08327</accession>
<protein>
    <recommendedName>
        <fullName>Glycogen biosynthesis protein GlgD</fullName>
    </recommendedName>
</protein>
<dbReference type="EMBL" id="D87026">
    <property type="protein sequence ID" value="BAA19590.1"/>
    <property type="molecule type" value="Genomic_DNA"/>
</dbReference>
<dbReference type="SMR" id="O08327"/>
<dbReference type="GO" id="GO:0008878">
    <property type="term" value="F:glucose-1-phosphate adenylyltransferase activity"/>
    <property type="evidence" value="ECO:0007669"/>
    <property type="project" value="InterPro"/>
</dbReference>
<dbReference type="GO" id="GO:0005978">
    <property type="term" value="P:glycogen biosynthetic process"/>
    <property type="evidence" value="ECO:0007669"/>
    <property type="project" value="UniProtKB-KW"/>
</dbReference>
<dbReference type="CDD" id="cd02508">
    <property type="entry name" value="ADP_Glucose_PP"/>
    <property type="match status" value="1"/>
</dbReference>
<dbReference type="CDD" id="cd04651">
    <property type="entry name" value="LbH_G1P_AT_C"/>
    <property type="match status" value="1"/>
</dbReference>
<dbReference type="Gene3D" id="2.160.10.10">
    <property type="entry name" value="Hexapeptide repeat proteins"/>
    <property type="match status" value="1"/>
</dbReference>
<dbReference type="Gene3D" id="3.90.550.10">
    <property type="entry name" value="Spore Coat Polysaccharide Biosynthesis Protein SpsA, Chain A"/>
    <property type="match status" value="1"/>
</dbReference>
<dbReference type="InterPro" id="IPR011831">
    <property type="entry name" value="ADP-Glc_PPase"/>
</dbReference>
<dbReference type="InterPro" id="IPR056818">
    <property type="entry name" value="GlmU/GlgC-like_hexapep"/>
</dbReference>
<dbReference type="InterPro" id="IPR005835">
    <property type="entry name" value="NTP_transferase_dom"/>
</dbReference>
<dbReference type="InterPro" id="IPR029044">
    <property type="entry name" value="Nucleotide-diphossugar_trans"/>
</dbReference>
<dbReference type="InterPro" id="IPR011004">
    <property type="entry name" value="Trimer_LpxA-like_sf"/>
</dbReference>
<dbReference type="PANTHER" id="PTHR43523">
    <property type="entry name" value="GLUCOSE-1-PHOSPHATE ADENYLYLTRANSFERASE-RELATED"/>
    <property type="match status" value="1"/>
</dbReference>
<dbReference type="PANTHER" id="PTHR43523:SF6">
    <property type="entry name" value="GLYCOGEN BIOSYNTHESIS PROTEIN GLGD"/>
    <property type="match status" value="1"/>
</dbReference>
<dbReference type="Pfam" id="PF24894">
    <property type="entry name" value="Hexapep_GlmU"/>
    <property type="match status" value="1"/>
</dbReference>
<dbReference type="Pfam" id="PF00483">
    <property type="entry name" value="NTP_transferase"/>
    <property type="match status" value="1"/>
</dbReference>
<dbReference type="SUPFAM" id="SSF53448">
    <property type="entry name" value="Nucleotide-diphospho-sugar transferases"/>
    <property type="match status" value="1"/>
</dbReference>
<dbReference type="SUPFAM" id="SSF51161">
    <property type="entry name" value="Trimeric LpxA-like enzymes"/>
    <property type="match status" value="1"/>
</dbReference>
<keyword id="KW-0320">Glycogen biosynthesis</keyword>
<evidence type="ECO:0000305" key="1"/>
<feature type="chain" id="PRO_0000195360" description="Glycogen biosynthesis protein GlgD">
    <location>
        <begin position="1"/>
        <end position="343"/>
    </location>
</feature>
<proteinExistence type="inferred from homology"/>
<sequence length="343" mass="38966">MNNKMLGVIDATTYIEALEPLIEQRSIAAVPFAGRYRLIDFVLSSMVNSGIESVAIFPKYQYRSLMDHLGSGKNWDLNRKRDGLFFFPSPDLLFSGERRVGAFAHFEQHIDYFLRSRQKYAVIANGYTVCNIDFDAVLNRHIENGCDVTEIRHRGRSLEMYLLETSLLLDLIADYKNHGYYSIVDVIRDYHRSLSICEYEYSGYAAVIDSVEQYFRSSMELLDRDVWEQLFLPSHPIYTKVKDEPPTKYGREGNVKRSMIANGCVIEGTVENSVLFRSVKIGKGAVVRNSIIMQKCQIGDGCVLDGVIIDKDAKVEPGVVLKGTKEQPFIVRKGTVQGEVISR</sequence>
<reference key="1">
    <citation type="journal article" date="1997" name="J. Bacteriol.">
        <title>Characterization of a gene cluster for glycogen biosynthesis and a heterotetrameric ADP-glucose pyrophosphorylase from Bacillus stearothermophilus.</title>
        <authorList>
            <person name="Takata H."/>
            <person name="Takaha T."/>
            <person name="Okada S."/>
            <person name="Takagi M."/>
            <person name="Imanaka T."/>
        </authorList>
    </citation>
    <scope>NUCLEOTIDE SEQUENCE [GENOMIC DNA]</scope>
    <source>
        <strain>TRBE14</strain>
    </source>
</reference>